<protein>
    <recommendedName>
        <fullName evidence="4">FMRFamide-like neuropeptides 22</fullName>
    </recommendedName>
    <component>
        <recommendedName>
            <fullName evidence="5">SPSAKWMRF-amide 1</fullName>
        </recommendedName>
    </component>
    <component>
        <recommendedName>
            <fullName evidence="5">SPSAKWMRF-amide 2</fullName>
        </recommendedName>
    </component>
    <component>
        <recommendedName>
            <fullName evidence="5">SPSAKWMRF-amide 3</fullName>
        </recommendedName>
    </component>
</protein>
<organism evidence="6">
    <name type="scientific">Caenorhabditis elegans</name>
    <dbReference type="NCBI Taxonomy" id="6239"/>
    <lineage>
        <taxon>Eukaryota</taxon>
        <taxon>Metazoa</taxon>
        <taxon>Ecdysozoa</taxon>
        <taxon>Nematoda</taxon>
        <taxon>Chromadorea</taxon>
        <taxon>Rhabditida</taxon>
        <taxon>Rhabditina</taxon>
        <taxon>Rhabditomorpha</taxon>
        <taxon>Rhabditoidea</taxon>
        <taxon>Rhabditidae</taxon>
        <taxon>Peloderinae</taxon>
        <taxon>Caenorhabditis</taxon>
    </lineage>
</organism>
<gene>
    <name evidence="7" type="primary">flp-22</name>
    <name evidence="7" type="ORF">F39H2.1</name>
</gene>
<accession>Q93702</accession>
<proteinExistence type="evidence at protein level"/>
<comment type="function">
    <text evidence="4">FMRFamides and FMRFamide-like peptides are neuropeptides.</text>
</comment>
<comment type="function">
    <text evidence="2">SPSAKWMRF-amide: Acts as a ligand for the npr-22 receptor in vitro.</text>
</comment>
<comment type="subcellular location">
    <subcellularLocation>
        <location evidence="4">Secreted</location>
    </subcellularLocation>
</comment>
<comment type="mass spectrometry">
    <molecule>SPSAKWMRF-amide 1</molecule>
</comment>
<comment type="similarity">
    <text evidence="1">Belongs to the FARP (FMRFamide related peptide) family.</text>
</comment>
<name>FLP22_CAEEL</name>
<evidence type="ECO:0000255" key="1"/>
<evidence type="ECO:0000269" key="2">
    <source>
    </source>
</evidence>
<evidence type="ECO:0000269" key="3">
    <source>
    </source>
</evidence>
<evidence type="ECO:0000305" key="4"/>
<evidence type="ECO:0000305" key="5">
    <source>
    </source>
</evidence>
<evidence type="ECO:0000312" key="6">
    <source>
        <dbReference type="Proteomes" id="UP000001940"/>
    </source>
</evidence>
<evidence type="ECO:0000312" key="7">
    <source>
        <dbReference type="WormBase" id="F39H2.1"/>
    </source>
</evidence>
<feature type="signal peptide" evidence="1">
    <location>
        <begin position="1"/>
        <end position="19"/>
    </location>
</feature>
<feature type="propeptide" id="PRO_0000442495" evidence="4">
    <location>
        <begin position="20"/>
        <end position="46"/>
    </location>
</feature>
<feature type="peptide" id="PRO_0000442496" description="SPSAKWMRF-amide 1" evidence="5">
    <location>
        <begin position="47"/>
        <end position="55"/>
    </location>
</feature>
<feature type="peptide" id="PRO_0000442497" description="SPSAKWMRF-amide 2" evidence="5">
    <location>
        <begin position="59"/>
        <end position="67"/>
    </location>
</feature>
<feature type="peptide" id="PRO_0000442498" description="SPSAKWMRF-amide 3" evidence="5">
    <location>
        <begin position="71"/>
        <end position="79"/>
    </location>
</feature>
<feature type="propeptide" id="PRO_0000442499" evidence="4">
    <location>
        <begin position="83"/>
        <end position="93"/>
    </location>
</feature>
<feature type="modified residue" description="Phenylalanine amide" evidence="5">
    <location>
        <position position="55"/>
    </location>
</feature>
<feature type="modified residue" description="Phenylalanine amide" evidence="5">
    <location>
        <position position="67"/>
    </location>
</feature>
<feature type="modified residue" description="Phenylalanine amide" evidence="5">
    <location>
        <position position="79"/>
    </location>
</feature>
<sequence>MNRSMIALCVVLMVSLVSAQVFDLDGQQLAGLEQNDARLMEQQVKRSPSAKWMRFGKRSPSAKWMRFGKRSPSAKWMRFGKRSGAEAVSEQDY</sequence>
<keyword id="KW-0027">Amidation</keyword>
<keyword id="KW-0165">Cleavage on pair of basic residues</keyword>
<keyword id="KW-0903">Direct protein sequencing</keyword>
<keyword id="KW-0527">Neuropeptide</keyword>
<keyword id="KW-1185">Reference proteome</keyword>
<keyword id="KW-0677">Repeat</keyword>
<keyword id="KW-0964">Secreted</keyword>
<keyword id="KW-0732">Signal</keyword>
<dbReference type="EMBL" id="BX284601">
    <property type="protein sequence ID" value="CAB03086.2"/>
    <property type="molecule type" value="Genomic_DNA"/>
</dbReference>
<dbReference type="PIR" id="T22006">
    <property type="entry name" value="T22006"/>
</dbReference>
<dbReference type="RefSeq" id="NP_492344.2">
    <property type="nucleotide sequence ID" value="NM_059943.6"/>
</dbReference>
<dbReference type="FunCoup" id="Q93702">
    <property type="interactions" value="1515"/>
</dbReference>
<dbReference type="STRING" id="6239.F39H2.1.1"/>
<dbReference type="PaxDb" id="6239-F39H2.1.2"/>
<dbReference type="EnsemblMetazoa" id="F39H2.1.1">
    <property type="protein sequence ID" value="F39H2.1.1"/>
    <property type="gene ID" value="WBGene00009562"/>
</dbReference>
<dbReference type="GeneID" id="172665"/>
<dbReference type="KEGG" id="cel:CELE_F39H2.1"/>
<dbReference type="UCSC" id="F39H2.1">
    <property type="organism name" value="c. elegans"/>
</dbReference>
<dbReference type="AGR" id="WB:WBGene00009562"/>
<dbReference type="CTD" id="172665"/>
<dbReference type="WormBase" id="F39H2.1">
    <property type="protein sequence ID" value="CE30530"/>
    <property type="gene ID" value="WBGene00009562"/>
    <property type="gene designation" value="flp-22"/>
</dbReference>
<dbReference type="eggNOG" id="ENOG502T0D2">
    <property type="taxonomic scope" value="Eukaryota"/>
</dbReference>
<dbReference type="HOGENOM" id="CLU_188608_0_0_1"/>
<dbReference type="InParanoid" id="Q93702"/>
<dbReference type="OMA" id="MNRSVIC"/>
<dbReference type="OrthoDB" id="5850318at2759"/>
<dbReference type="PRO" id="PR:Q93702"/>
<dbReference type="Proteomes" id="UP000001940">
    <property type="component" value="Chromosome I"/>
</dbReference>
<dbReference type="Bgee" id="WBGene00009562">
    <property type="expression patterns" value="Expressed in larva and 4 other cell types or tissues"/>
</dbReference>
<dbReference type="GO" id="GO:0005576">
    <property type="term" value="C:extracellular region"/>
    <property type="evidence" value="ECO:0007669"/>
    <property type="project" value="UniProtKB-SubCell"/>
</dbReference>
<dbReference type="GO" id="GO:0071855">
    <property type="term" value="F:neuropeptide receptor binding"/>
    <property type="evidence" value="ECO:0000314"/>
    <property type="project" value="WormBase"/>
</dbReference>
<dbReference type="GO" id="GO:0007218">
    <property type="term" value="P:neuropeptide signaling pathway"/>
    <property type="evidence" value="ECO:0000314"/>
    <property type="project" value="WormBase"/>
</dbReference>
<reference evidence="6" key="1">
    <citation type="journal article" date="1998" name="Science">
        <title>Genome sequence of the nematode C. elegans: a platform for investigating biology.</title>
        <authorList>
            <consortium name="The C. elegans sequencing consortium"/>
        </authorList>
    </citation>
    <scope>NUCLEOTIDE SEQUENCE [LARGE SCALE GENOMIC DNA]</scope>
    <source>
        <strain evidence="6">Bristol N2</strain>
    </source>
</reference>
<reference evidence="4" key="2">
    <citation type="journal article" date="2017" name="Elife">
        <title>Luqin-like RYamide peptides regulate food-evoked responses in C. elegans.</title>
        <authorList>
            <person name="Ohno H."/>
            <person name="Yoshida M."/>
            <person name="Sato T."/>
            <person name="Kato J."/>
            <person name="Miyazato M."/>
            <person name="Kojima M."/>
            <person name="Ida T."/>
            <person name="Iino Y."/>
        </authorList>
    </citation>
    <scope>PROTEIN SEQUENCE OF 47-55; 59-67 AND 71-79</scope>
    <scope>MASS SPECTROMETRY</scope>
</reference>
<reference evidence="4" key="3">
    <citation type="journal article" date="2006" name="Peptides">
        <title>FMRFamide related peptide ligands activate the Caenorhabditis elegans orphan GPCR Y59H11AL.1.</title>
        <authorList>
            <person name="Mertens I."/>
            <person name="Clinckspoor I."/>
            <person name="Janssen T."/>
            <person name="Nachman R."/>
            <person name="Schoofs L."/>
        </authorList>
    </citation>
    <scope>FUNCTION</scope>
    <scope>AMIDATION AT PHE-55; PHE-67 AND PHE-79</scope>
</reference>